<name>URE3_CORGB</name>
<organism>
    <name type="scientific">Corynebacterium glutamicum (strain R)</name>
    <dbReference type="NCBI Taxonomy" id="340322"/>
    <lineage>
        <taxon>Bacteria</taxon>
        <taxon>Bacillati</taxon>
        <taxon>Actinomycetota</taxon>
        <taxon>Actinomycetes</taxon>
        <taxon>Mycobacteriales</taxon>
        <taxon>Corynebacteriaceae</taxon>
        <taxon>Corynebacterium</taxon>
    </lineage>
</organism>
<reference key="1">
    <citation type="journal article" date="2007" name="Microbiology">
        <title>Comparative analysis of the Corynebacterium glutamicum group and complete genome sequence of strain R.</title>
        <authorList>
            <person name="Yukawa H."/>
            <person name="Omumasaba C.A."/>
            <person name="Nonaka H."/>
            <person name="Kos P."/>
            <person name="Okai N."/>
            <person name="Suzuki N."/>
            <person name="Suda M."/>
            <person name="Tsuge Y."/>
            <person name="Watanabe J."/>
            <person name="Ikeda Y."/>
            <person name="Vertes A.A."/>
            <person name="Inui M."/>
        </authorList>
    </citation>
    <scope>NUCLEOTIDE SEQUENCE [LARGE SCALE GENOMIC DNA]</scope>
    <source>
        <strain>R</strain>
    </source>
</reference>
<accession>A4QA21</accession>
<sequence>MHITPREQEKLMIVVAADLARRRKDRGLKLNHPEAVALITYELIEGARDGRTVADLMSWGSTILTRDDVLEGIPEMIPDIQVEATFDDGTKLVTVHNPIR</sequence>
<gene>
    <name evidence="1" type="primary">ureA</name>
    <name type="ordered locus">cgR_0103</name>
</gene>
<feature type="chain" id="PRO_1000046325" description="Urease subunit gamma">
    <location>
        <begin position="1"/>
        <end position="100"/>
    </location>
</feature>
<protein>
    <recommendedName>
        <fullName evidence="1">Urease subunit gamma</fullName>
        <ecNumber evidence="1">3.5.1.5</ecNumber>
    </recommendedName>
    <alternativeName>
        <fullName evidence="1">Urea amidohydrolase subunit gamma</fullName>
    </alternativeName>
</protein>
<evidence type="ECO:0000255" key="1">
    <source>
        <dbReference type="HAMAP-Rule" id="MF_00739"/>
    </source>
</evidence>
<comment type="catalytic activity">
    <reaction evidence="1">
        <text>urea + 2 H2O + H(+) = hydrogencarbonate + 2 NH4(+)</text>
        <dbReference type="Rhea" id="RHEA:20557"/>
        <dbReference type="ChEBI" id="CHEBI:15377"/>
        <dbReference type="ChEBI" id="CHEBI:15378"/>
        <dbReference type="ChEBI" id="CHEBI:16199"/>
        <dbReference type="ChEBI" id="CHEBI:17544"/>
        <dbReference type="ChEBI" id="CHEBI:28938"/>
        <dbReference type="EC" id="3.5.1.5"/>
    </reaction>
</comment>
<comment type="pathway">
    <text evidence="1">Nitrogen metabolism; urea degradation; CO(2) and NH(3) from urea (urease route): step 1/1.</text>
</comment>
<comment type="subunit">
    <text evidence="1">Heterotrimer of UreA (gamma), UreB (beta) and UreC (alpha) subunits. Three heterotrimers associate to form the active enzyme.</text>
</comment>
<comment type="subcellular location">
    <subcellularLocation>
        <location evidence="1">Cytoplasm</location>
    </subcellularLocation>
</comment>
<comment type="similarity">
    <text evidence="1">Belongs to the urease gamma subunit family.</text>
</comment>
<keyword id="KW-0963">Cytoplasm</keyword>
<keyword id="KW-0378">Hydrolase</keyword>
<proteinExistence type="inferred from homology"/>
<dbReference type="EC" id="3.5.1.5" evidence="1"/>
<dbReference type="EMBL" id="AP009044">
    <property type="protein sequence ID" value="BAF53064.1"/>
    <property type="molecule type" value="Genomic_DNA"/>
</dbReference>
<dbReference type="RefSeq" id="WP_003857708.1">
    <property type="nucleotide sequence ID" value="NC_009342.1"/>
</dbReference>
<dbReference type="SMR" id="A4QA21"/>
<dbReference type="GeneID" id="1021068"/>
<dbReference type="KEGG" id="cgt:cgR_0103"/>
<dbReference type="HOGENOM" id="CLU_145825_1_0_11"/>
<dbReference type="PhylomeDB" id="A4QA21"/>
<dbReference type="UniPathway" id="UPA00258">
    <property type="reaction ID" value="UER00370"/>
</dbReference>
<dbReference type="Proteomes" id="UP000006698">
    <property type="component" value="Chromosome"/>
</dbReference>
<dbReference type="GO" id="GO:0005737">
    <property type="term" value="C:cytoplasm"/>
    <property type="evidence" value="ECO:0007669"/>
    <property type="project" value="UniProtKB-SubCell"/>
</dbReference>
<dbReference type="GO" id="GO:0016151">
    <property type="term" value="F:nickel cation binding"/>
    <property type="evidence" value="ECO:0007669"/>
    <property type="project" value="InterPro"/>
</dbReference>
<dbReference type="GO" id="GO:0009039">
    <property type="term" value="F:urease activity"/>
    <property type="evidence" value="ECO:0007669"/>
    <property type="project" value="UniProtKB-UniRule"/>
</dbReference>
<dbReference type="GO" id="GO:0043419">
    <property type="term" value="P:urea catabolic process"/>
    <property type="evidence" value="ECO:0007669"/>
    <property type="project" value="UniProtKB-UniRule"/>
</dbReference>
<dbReference type="CDD" id="cd00390">
    <property type="entry name" value="Urease_gamma"/>
    <property type="match status" value="1"/>
</dbReference>
<dbReference type="Gene3D" id="3.30.280.10">
    <property type="entry name" value="Urease, gamma-like subunit"/>
    <property type="match status" value="1"/>
</dbReference>
<dbReference type="HAMAP" id="MF_00739">
    <property type="entry name" value="Urease_gamma"/>
    <property type="match status" value="1"/>
</dbReference>
<dbReference type="InterPro" id="IPR012010">
    <property type="entry name" value="Urease_gamma"/>
</dbReference>
<dbReference type="InterPro" id="IPR002026">
    <property type="entry name" value="Urease_gamma/gamma-beta_su"/>
</dbReference>
<dbReference type="InterPro" id="IPR036463">
    <property type="entry name" value="Urease_gamma_sf"/>
</dbReference>
<dbReference type="InterPro" id="IPR050069">
    <property type="entry name" value="Urease_subunit"/>
</dbReference>
<dbReference type="NCBIfam" id="NF009712">
    <property type="entry name" value="PRK13241.1"/>
    <property type="match status" value="1"/>
</dbReference>
<dbReference type="NCBIfam" id="TIGR00193">
    <property type="entry name" value="urease_gam"/>
    <property type="match status" value="1"/>
</dbReference>
<dbReference type="PANTHER" id="PTHR33569">
    <property type="entry name" value="UREASE"/>
    <property type="match status" value="1"/>
</dbReference>
<dbReference type="PANTHER" id="PTHR33569:SF1">
    <property type="entry name" value="UREASE"/>
    <property type="match status" value="1"/>
</dbReference>
<dbReference type="Pfam" id="PF00547">
    <property type="entry name" value="Urease_gamma"/>
    <property type="match status" value="1"/>
</dbReference>
<dbReference type="PIRSF" id="PIRSF001223">
    <property type="entry name" value="Urease_gamma"/>
    <property type="match status" value="1"/>
</dbReference>
<dbReference type="SUPFAM" id="SSF54111">
    <property type="entry name" value="Urease, gamma-subunit"/>
    <property type="match status" value="1"/>
</dbReference>